<organism>
    <name type="scientific">Vibrio mimicus</name>
    <dbReference type="NCBI Taxonomy" id="674"/>
    <lineage>
        <taxon>Bacteria</taxon>
        <taxon>Pseudomonadati</taxon>
        <taxon>Pseudomonadota</taxon>
        <taxon>Gammaproteobacteria</taxon>
        <taxon>Vibrionales</taxon>
        <taxon>Vibrionaceae</taxon>
        <taxon>Vibrio</taxon>
    </lineage>
</organism>
<proteinExistence type="evidence at protein level"/>
<accession>Q07792</accession>
<comment type="function">
    <text>Favors the hydrolysis of several arylesters.</text>
</comment>
<comment type="catalytic activity">
    <reaction>
        <text>a phenyl acetate + H2O = a phenol + acetate + H(+)</text>
        <dbReference type="Rhea" id="RHEA:17309"/>
        <dbReference type="ChEBI" id="CHEBI:15377"/>
        <dbReference type="ChEBI" id="CHEBI:15378"/>
        <dbReference type="ChEBI" id="CHEBI:30089"/>
        <dbReference type="ChEBI" id="CHEBI:33853"/>
        <dbReference type="ChEBI" id="CHEBI:140310"/>
        <dbReference type="EC" id="3.1.1.2"/>
    </reaction>
</comment>
<comment type="subunit">
    <text>Homodimer.</text>
</comment>
<comment type="similarity">
    <text evidence="3">Belongs to the 'GDSL' lipolytic enzyme family.</text>
</comment>
<name>ESTE_VIBMI</name>
<reference key="1">
    <citation type="journal article" date="1994" name="Biochem. J.">
        <title>Nucleotide sequence of a novel arylesterase gene from Vibro mimicus and characterization of the enzyme expressed in Escherichia coli.</title>
        <authorList>
            <person name="Shaw J.-F."/>
            <person name="Chang R.-C."/>
            <person name="Chuang K.-H."/>
            <person name="Yen Y.-T."/>
            <person name="Wang Y.-J."/>
            <person name="Wang F.-G."/>
        </authorList>
    </citation>
    <scope>NUCLEOTIDE SEQUENCE [GENOMIC DNA]</scope>
    <scope>PROTEIN SEQUENCE OF 20-29</scope>
    <scope>MUTAGENESIS</scope>
    <source>
        <strain>NTOU 66</strain>
    </source>
</reference>
<sequence length="200" mass="22251">MIRLLSLVLFFCLSAASQASEKLLVLGDSLSAGYQMPIEKSWPSLLPDALLEHGQDVTVINGSISGDTTGNGLARLPQLLDQHTPDLVLIELGANDGLRGFPPKVITSNLSKMISLIKDSGANVVMMQIRVPPNYGKRYSDMFYDIYPKLAEHQQVQLMPFFLEHVITKPEWMMDDGLHPKPEAQPWIAEFVAQELVKHL</sequence>
<dbReference type="EC" id="3.1.1.2"/>
<dbReference type="EMBL" id="X71116">
    <property type="protein sequence ID" value="CAA50433.1"/>
    <property type="molecule type" value="Genomic_DNA"/>
</dbReference>
<dbReference type="PIR" id="S43387">
    <property type="entry name" value="S32044"/>
</dbReference>
<dbReference type="SMR" id="Q07792"/>
<dbReference type="GO" id="GO:0004064">
    <property type="term" value="F:arylesterase activity"/>
    <property type="evidence" value="ECO:0007669"/>
    <property type="project" value="UniProtKB-EC"/>
</dbReference>
<dbReference type="GO" id="GO:0004622">
    <property type="term" value="F:lysophospholipase activity"/>
    <property type="evidence" value="ECO:0007669"/>
    <property type="project" value="TreeGrafter"/>
</dbReference>
<dbReference type="GO" id="GO:0006629">
    <property type="term" value="P:lipid metabolic process"/>
    <property type="evidence" value="ECO:0007669"/>
    <property type="project" value="InterPro"/>
</dbReference>
<dbReference type="CDD" id="cd01822">
    <property type="entry name" value="Lysophospholipase_L1_like"/>
    <property type="match status" value="1"/>
</dbReference>
<dbReference type="Gene3D" id="3.40.50.1110">
    <property type="entry name" value="SGNH hydrolase"/>
    <property type="match status" value="1"/>
</dbReference>
<dbReference type="InterPro" id="IPR051532">
    <property type="entry name" value="Ester_Hydrolysis_Enzymes"/>
</dbReference>
<dbReference type="InterPro" id="IPR008265">
    <property type="entry name" value="Lipase_GDSL_AS"/>
</dbReference>
<dbReference type="InterPro" id="IPR013830">
    <property type="entry name" value="SGNH_hydro"/>
</dbReference>
<dbReference type="InterPro" id="IPR036514">
    <property type="entry name" value="SGNH_hydro_sf"/>
</dbReference>
<dbReference type="PANTHER" id="PTHR30383">
    <property type="entry name" value="THIOESTERASE 1/PROTEASE 1/LYSOPHOSPHOLIPASE L1"/>
    <property type="match status" value="1"/>
</dbReference>
<dbReference type="PANTHER" id="PTHR30383:SF24">
    <property type="entry name" value="THIOESTERASE 1_PROTEASE 1_LYSOPHOSPHOLIPASE L1"/>
    <property type="match status" value="1"/>
</dbReference>
<dbReference type="Pfam" id="PF13472">
    <property type="entry name" value="Lipase_GDSL_2"/>
    <property type="match status" value="1"/>
</dbReference>
<dbReference type="SUPFAM" id="SSF52266">
    <property type="entry name" value="SGNH hydrolase"/>
    <property type="match status" value="1"/>
</dbReference>
<dbReference type="PROSITE" id="PS01098">
    <property type="entry name" value="LIPASE_GDSL_SER"/>
    <property type="match status" value="1"/>
</dbReference>
<feature type="signal peptide" evidence="2">
    <location>
        <begin position="1"/>
        <end position="19"/>
    </location>
</feature>
<feature type="chain" id="PRO_0000017847" description="Arylesterase">
    <location>
        <begin position="20"/>
        <end position="200"/>
    </location>
</feature>
<feature type="active site" description="Nucleophile" evidence="1">
    <location>
        <position position="29"/>
    </location>
</feature>
<feature type="active site" evidence="1">
    <location>
        <position position="176"/>
    </location>
</feature>
<feature type="active site" evidence="1">
    <location>
        <position position="179"/>
    </location>
</feature>
<feature type="mutagenesis site" description="Loss of activity." evidence="2">
    <original>S</original>
    <variation>A</variation>
    <variation>C</variation>
    <location>
        <position position="29"/>
    </location>
</feature>
<feature type="mutagenesis site" description="No loss of activity." evidence="2">
    <original>S</original>
    <variation>A</variation>
    <location>
        <position position="31"/>
    </location>
</feature>
<protein>
    <recommendedName>
        <fullName>Arylesterase</fullName>
        <ecNumber>3.1.1.2</ecNumber>
    </recommendedName>
    <alternativeName>
        <fullName>Aryl-ester hydrolase</fullName>
    </alternativeName>
</protein>
<evidence type="ECO:0000250" key="1"/>
<evidence type="ECO:0000269" key="2">
    <source>
    </source>
</evidence>
<evidence type="ECO:0000305" key="3"/>
<keyword id="KW-0903">Direct protein sequencing</keyword>
<keyword id="KW-0378">Hydrolase</keyword>
<keyword id="KW-0732">Signal</keyword>